<reference key="1">
    <citation type="journal article" date="1993" name="J. Bacteriol.">
        <title>Characterization of the inducible nickel and cobalt resistance determinant cnr from pMOL28 of Alcaligenes eutrophus CH34.</title>
        <authorList>
            <person name="Liesegang H."/>
            <person name="Lemke K."/>
            <person name="Siddiqui R.A."/>
            <person name="Schlegel H.-G."/>
        </authorList>
    </citation>
    <scope>NUCLEOTIDE SEQUENCE [GENOMIC DNA]</scope>
</reference>
<reference key="2">
    <citation type="submission" date="2004-10" db="EMBL/GenBank/DDBJ databases">
        <title>Sequence and features of the Ralstonia metallidurans CH34 heavy metal plasmids pMOL28 and pMOL30.</title>
        <authorList>
            <person name="van der Lelie D."/>
            <person name="Monchy S."/>
            <person name="Taghavi S."/>
            <person name="McCorkle S."/>
            <person name="Dunn J."/>
            <person name="Benotmane M."/>
            <person name="Vallaeys T."/>
            <person name="Lapidus A."/>
            <person name="Mergeay M."/>
        </authorList>
    </citation>
    <scope>NUCLEOTIDE SEQUENCE [LARGE SCALE GENOMIC DNA]</scope>
</reference>
<reference key="3">
    <citation type="journal article" date="2010" name="PLoS ONE">
        <title>The complete genome sequence of Cupriavidus metallidurans strain CH34, a master survivalist in harsh and anthropogenic environments.</title>
        <authorList>
            <person name="Janssen P.J."/>
            <person name="Van Houdt R."/>
            <person name="Moors H."/>
            <person name="Monsieurs P."/>
            <person name="Morin N."/>
            <person name="Michaux A."/>
            <person name="Benotmane M.A."/>
            <person name="Leys N."/>
            <person name="Vallaeys T."/>
            <person name="Lapidus A."/>
            <person name="Monchy S."/>
            <person name="Medigue C."/>
            <person name="Taghavi S."/>
            <person name="McCorkle S."/>
            <person name="Dunn J."/>
            <person name="van der Lelie D."/>
            <person name="Mergeay M."/>
        </authorList>
    </citation>
    <scope>NUCLEOTIDE SEQUENCE [LARGE SCALE GENOMIC DNA]</scope>
    <source>
        <strain>ATCC 43123 / DSM 2839 / NBRC 102507 / CH34</strain>
    </source>
</reference>
<reference key="4">
    <citation type="journal article" date="2000" name="J. Bacteriol.">
        <title>Regulation of the cnr cobalt and nickel resistance determinant from Ralstonia sp. strain CH34.</title>
        <authorList>
            <person name="Grass G."/>
            <person name="Grosse C."/>
            <person name="Nies D.H."/>
        </authorList>
    </citation>
    <scope>INDUCTION</scope>
</reference>
<name>CNRB_CUPMC</name>
<proteinExistence type="evidence at transcript level"/>
<feature type="chain" id="PRO_0000201863" description="Nickel and cobalt resistance protein CnrB">
    <location>
        <begin position="1"/>
        <end position="395"/>
    </location>
</feature>
<feature type="transmembrane region" description="Helical" evidence="1">
    <location>
        <begin position="13"/>
        <end position="33"/>
    </location>
</feature>
<feature type="region of interest" description="Disordered" evidence="2">
    <location>
        <begin position="35"/>
        <end position="55"/>
    </location>
</feature>
<feature type="coiled-coil region" evidence="1">
    <location>
        <begin position="140"/>
        <end position="193"/>
    </location>
</feature>
<feature type="compositionally biased region" description="Polar residues" evidence="2">
    <location>
        <begin position="37"/>
        <end position="50"/>
    </location>
</feature>
<gene>
    <name type="primary">cnrB</name>
    <name type="ordered locus">Rmet_6209</name>
    <name type="ORF">RMe0084</name>
</gene>
<organism>
    <name type="scientific">Cupriavidus metallidurans (strain ATCC 43123 / DSM 2839 / NBRC 102507 / CH34)</name>
    <name type="common">Ralstonia metallidurans</name>
    <dbReference type="NCBI Taxonomy" id="266264"/>
    <lineage>
        <taxon>Bacteria</taxon>
        <taxon>Pseudomonadati</taxon>
        <taxon>Pseudomonadota</taxon>
        <taxon>Betaproteobacteria</taxon>
        <taxon>Burkholderiales</taxon>
        <taxon>Burkholderiaceae</taxon>
        <taxon>Cupriavidus</taxon>
    </lineage>
</organism>
<geneLocation type="plasmid">
    <name>pMOL28</name>
</geneLocation>
<protein>
    <recommendedName>
        <fullName>Nickel and cobalt resistance protein CnrB</fullName>
    </recommendedName>
</protein>
<dbReference type="EMBL" id="M91650">
    <property type="protein sequence ID" value="AAA21969.1"/>
    <property type="molecule type" value="Genomic_DNA"/>
</dbReference>
<dbReference type="EMBL" id="AJ276513">
    <property type="protein sequence ID" value="CAB82452.1"/>
    <property type="molecule type" value="Genomic_DNA"/>
</dbReference>
<dbReference type="EMBL" id="X90708">
    <property type="protein sequence ID" value="CAI30228.1"/>
    <property type="molecule type" value="Genomic_DNA"/>
</dbReference>
<dbReference type="EMBL" id="CP000355">
    <property type="protein sequence ID" value="ABF13068.1"/>
    <property type="molecule type" value="Genomic_DNA"/>
</dbReference>
<dbReference type="PIR" id="F47056">
    <property type="entry name" value="F47056"/>
</dbReference>
<dbReference type="RefSeq" id="WP_011239967.1">
    <property type="nucleotide sequence ID" value="NC_007972.2"/>
</dbReference>
<dbReference type="RefSeq" id="YP_161706.1">
    <property type="nucleotide sequence ID" value="NC_006525.1"/>
</dbReference>
<dbReference type="SMR" id="P37973"/>
<dbReference type="TCDB" id="8.A.1.2.1">
    <property type="family name" value="the membrane fusion protein (mfp) family"/>
</dbReference>
<dbReference type="GeneID" id="60825773"/>
<dbReference type="KEGG" id="rme:Rmet_6209"/>
<dbReference type="HOGENOM" id="CLU_018816_13_0_4"/>
<dbReference type="Proteomes" id="UP000002429">
    <property type="component" value="Plasmid pMOL28"/>
</dbReference>
<dbReference type="GO" id="GO:0030313">
    <property type="term" value="C:cell envelope"/>
    <property type="evidence" value="ECO:0007669"/>
    <property type="project" value="TreeGrafter"/>
</dbReference>
<dbReference type="GO" id="GO:0005886">
    <property type="term" value="C:plasma membrane"/>
    <property type="evidence" value="ECO:0007669"/>
    <property type="project" value="UniProtKB-SubCell"/>
</dbReference>
<dbReference type="GO" id="GO:0046873">
    <property type="term" value="F:metal ion transmembrane transporter activity"/>
    <property type="evidence" value="ECO:0007669"/>
    <property type="project" value="InterPro"/>
</dbReference>
<dbReference type="GO" id="GO:0060003">
    <property type="term" value="P:copper ion export"/>
    <property type="evidence" value="ECO:0007669"/>
    <property type="project" value="TreeGrafter"/>
</dbReference>
<dbReference type="GO" id="GO:0015679">
    <property type="term" value="P:plasma membrane copper ion transport"/>
    <property type="evidence" value="ECO:0007669"/>
    <property type="project" value="TreeGrafter"/>
</dbReference>
<dbReference type="FunFam" id="2.40.420.20:FF:000006">
    <property type="entry name" value="RND family efflux transporter MFP subunit"/>
    <property type="match status" value="1"/>
</dbReference>
<dbReference type="Gene3D" id="2.40.30.170">
    <property type="match status" value="1"/>
</dbReference>
<dbReference type="Gene3D" id="2.40.420.20">
    <property type="match status" value="1"/>
</dbReference>
<dbReference type="Gene3D" id="2.40.50.100">
    <property type="match status" value="1"/>
</dbReference>
<dbReference type="Gene3D" id="1.10.287.470">
    <property type="entry name" value="Helix hairpin bin"/>
    <property type="match status" value="1"/>
</dbReference>
<dbReference type="InterPro" id="IPR005695">
    <property type="entry name" value="Co/Zn/Cd_resistance_CzcB-like"/>
</dbReference>
<dbReference type="InterPro" id="IPR032317">
    <property type="entry name" value="CusB_D23"/>
</dbReference>
<dbReference type="InterPro" id="IPR051909">
    <property type="entry name" value="MFP_Cation_Efflux"/>
</dbReference>
<dbReference type="InterPro" id="IPR006143">
    <property type="entry name" value="RND_pump_MFP"/>
</dbReference>
<dbReference type="NCBIfam" id="TIGR00999">
    <property type="entry name" value="8a0102"/>
    <property type="match status" value="1"/>
</dbReference>
<dbReference type="NCBIfam" id="TIGR01730">
    <property type="entry name" value="RND_mfp"/>
    <property type="match status" value="1"/>
</dbReference>
<dbReference type="PANTHER" id="PTHR30097">
    <property type="entry name" value="CATION EFFLUX SYSTEM PROTEIN CUSB"/>
    <property type="match status" value="1"/>
</dbReference>
<dbReference type="PANTHER" id="PTHR30097:SF4">
    <property type="entry name" value="SLR6042 PROTEIN"/>
    <property type="match status" value="1"/>
</dbReference>
<dbReference type="Pfam" id="PF16576">
    <property type="entry name" value="HlyD_D23"/>
    <property type="match status" value="1"/>
</dbReference>
<dbReference type="SUPFAM" id="SSF111369">
    <property type="entry name" value="HlyD-like secretion proteins"/>
    <property type="match status" value="1"/>
</dbReference>
<comment type="function">
    <text>The products of the genes cnrA, cnrB, and cnrC are likely to form a membrane-bound protein complex catalyzing an energy-dependent efflux of Ni(2+) and Co(2+). The mechanism of action of the CnrCBA complex may be that of a proton/cation antiporter.</text>
</comment>
<comment type="subcellular location">
    <subcellularLocation>
        <location evidence="4">Cell inner membrane</location>
        <topology evidence="4">Single-pass membrane protein</topology>
    </subcellularLocation>
</comment>
<comment type="induction">
    <text evidence="3">By nickel.</text>
</comment>
<comment type="similarity">
    <text evidence="4">Belongs to the membrane fusion protein (MFP) (TC 8.A.1) family.</text>
</comment>
<evidence type="ECO:0000255" key="1"/>
<evidence type="ECO:0000256" key="2">
    <source>
        <dbReference type="SAM" id="MobiDB-lite"/>
    </source>
</evidence>
<evidence type="ECO:0000269" key="3">
    <source>
    </source>
</evidence>
<evidence type="ECO:0000305" key="4"/>
<accession>P37973</accession>
<accession>Q5NUX4</accession>
<accession>Q7B055</accession>
<sequence length="395" mass="40083">MMKNERRSVNWPMIAGVAAVAAAVGFGAAHLPVSEKSPASTQAPEAQKPQSAPVKPGLKEVKIPATYLAAANIAVEPVASAAVGTEILAPATVAALPGSEAVIVSRAAGAVQRVQRRLGDVVKAGDVLALVDSPEAAGMAAERKVAQAKADLARKTYEREASLFQQGVTPRQEMEAAKAALDVAQAEALRAATVAQSAHLASDGRSVAVVSPIAGKITAQSVTLGAFVAPQAELFRVAGTGAVQVEAAVTAADTSRIVAGSEATILLANGSPLSARVQAVTPTVTGSARVATVVVVPAQPTDRLVVGEGVQVRLRTAVADAAALSVPEDAVQNLDGRDVLFVRTQEGFRPMPVLVGTRSGGSAQILSGVQAGEQVATRNAFLVKAEMNKGGGDEE</sequence>
<keyword id="KW-0997">Cell inner membrane</keyword>
<keyword id="KW-1003">Cell membrane</keyword>
<keyword id="KW-0170">Cobalt</keyword>
<keyword id="KW-0175">Coiled coil</keyword>
<keyword id="KW-0472">Membrane</keyword>
<keyword id="KW-0533">Nickel</keyword>
<keyword id="KW-0614">Plasmid</keyword>
<keyword id="KW-1185">Reference proteome</keyword>
<keyword id="KW-0812">Transmembrane</keyword>
<keyword id="KW-1133">Transmembrane helix</keyword>
<keyword id="KW-0813">Transport</keyword>